<organism>
    <name type="scientific">Bison bonasus</name>
    <name type="common">European bison</name>
    <dbReference type="NCBI Taxonomy" id="9902"/>
    <lineage>
        <taxon>Eukaryota</taxon>
        <taxon>Metazoa</taxon>
        <taxon>Chordata</taxon>
        <taxon>Craniata</taxon>
        <taxon>Vertebrata</taxon>
        <taxon>Euteleostomi</taxon>
        <taxon>Mammalia</taxon>
        <taxon>Eutheria</taxon>
        <taxon>Laurasiatheria</taxon>
        <taxon>Artiodactyla</taxon>
        <taxon>Ruminantia</taxon>
        <taxon>Pecora</taxon>
        <taxon>Bovidae</taxon>
        <taxon>Bovinae</taxon>
        <taxon>Bison</taxon>
    </lineage>
</organism>
<protein>
    <recommendedName>
        <fullName>Pregnancy-associated glycoprotein 71D</fullName>
        <ecNumber>3.4.23.-</ecNumber>
    </recommendedName>
    <alternativeName>
        <fullName>EbPAG-D 71 kDa</fullName>
    </alternativeName>
</protein>
<feature type="chain" id="PRO_0000314072" description="Pregnancy-associated glycoprotein 71D">
    <location>
        <begin position="1"/>
        <end position="20" status="greater than"/>
    </location>
</feature>
<feature type="glycosylation site" description="N-linked (GlcNAc...) asparagine" evidence="2">
    <location>
        <position position="4"/>
    </location>
</feature>
<feature type="non-terminal residue" evidence="3">
    <location>
        <position position="20"/>
    </location>
</feature>
<evidence type="ECO:0000255" key="1"/>
<evidence type="ECO:0000269" key="2">
    <source>
    </source>
</evidence>
<evidence type="ECO:0000303" key="3">
    <source>
    </source>
</evidence>
<evidence type="ECO:0000305" key="4"/>
<name>PA71D_BISBO</name>
<sequence>RGSNLTIHPLRNIIDLFYVG</sequence>
<proteinExistence type="evidence at protein level"/>
<accession>P85322</accession>
<reference key="1">
    <citation type="journal article" date="2009" name="Anim. Reprod. Sci.">
        <title>Identification of multiple pregnancy-associated glycoproteins (PAGs) purified from the European bison (Eb; Bison bonasus L.) placentas.</title>
        <authorList>
            <person name="Kiewisz J."/>
            <person name="Melo de Sousa N."/>
            <person name="Beckers J.-F.M.P."/>
            <person name="Panasiewicz G."/>
            <person name="Gizejewski Z."/>
            <person name="Szafranska B."/>
        </authorList>
    </citation>
    <scope>PROTEIN SEQUENCE</scope>
    <scope>TISSUE SPECIFICITY</scope>
    <scope>DEVELOPMENTAL STAGE</scope>
    <scope>GLYCOSYLATION AT ASN-4</scope>
    <source>
        <tissue>Placenta</tissue>
    </source>
</reference>
<keyword id="KW-0064">Aspartyl protease</keyword>
<keyword id="KW-0903">Direct protein sequencing</keyword>
<keyword id="KW-0325">Glycoprotein</keyword>
<keyword id="KW-0378">Hydrolase</keyword>
<keyword id="KW-0645">Protease</keyword>
<keyword id="KW-0964">Secreted</keyword>
<comment type="subcellular location">
    <subcellularLocation>
        <location evidence="4">Secreted</location>
        <location evidence="4">Extracellular space</location>
    </subcellularLocation>
</comment>
<comment type="tissue specificity">
    <text evidence="2">Chorionic epithelium (trophectoderm) and placental cotyledons.</text>
</comment>
<comment type="developmental stage">
    <text evidence="2">Expressed at 60 dpc.</text>
</comment>
<comment type="miscellaneous">
    <text evidence="2">On the 2D-gel the determined pI of this protein is: 3.7, its MW is: 71 kDa.</text>
</comment>
<comment type="similarity">
    <text evidence="1">Belongs to the peptidase A1 family.</text>
</comment>
<dbReference type="EC" id="3.4.23.-"/>
<dbReference type="iPTMnet" id="P85322"/>
<dbReference type="GO" id="GO:0005576">
    <property type="term" value="C:extracellular region"/>
    <property type="evidence" value="ECO:0007669"/>
    <property type="project" value="UniProtKB-SubCell"/>
</dbReference>
<dbReference type="GO" id="GO:0004190">
    <property type="term" value="F:aspartic-type endopeptidase activity"/>
    <property type="evidence" value="ECO:0007669"/>
    <property type="project" value="UniProtKB-KW"/>
</dbReference>
<dbReference type="GO" id="GO:0006508">
    <property type="term" value="P:proteolysis"/>
    <property type="evidence" value="ECO:0007669"/>
    <property type="project" value="UniProtKB-KW"/>
</dbReference>